<accession>Q7MM60</accession>
<reference key="1">
    <citation type="journal article" date="2003" name="Genome Res.">
        <title>Comparative genome analysis of Vibrio vulnificus, a marine pathogen.</title>
        <authorList>
            <person name="Chen C.-Y."/>
            <person name="Wu K.-M."/>
            <person name="Chang Y.-C."/>
            <person name="Chang C.-H."/>
            <person name="Tsai H.-C."/>
            <person name="Liao T.-L."/>
            <person name="Liu Y.-M."/>
            <person name="Chen H.-J."/>
            <person name="Shen A.B.-T."/>
            <person name="Li J.-C."/>
            <person name="Su T.-L."/>
            <person name="Shao C.-P."/>
            <person name="Lee C.-T."/>
            <person name="Hor L.-I."/>
            <person name="Tsai S.-F."/>
        </authorList>
    </citation>
    <scope>NUCLEOTIDE SEQUENCE [LARGE SCALE GENOMIC DNA]</scope>
    <source>
        <strain>YJ016</strain>
    </source>
</reference>
<keyword id="KW-0997">Cell inner membrane</keyword>
<keyword id="KW-1003">Cell membrane</keyword>
<keyword id="KW-0472">Membrane</keyword>
<keyword id="KW-0812">Transmembrane</keyword>
<keyword id="KW-1133">Transmembrane helix</keyword>
<name>YCIB_VIBVY</name>
<feature type="chain" id="PRO_0000206554" description="Inner membrane-spanning protein YciB">
    <location>
        <begin position="1"/>
        <end position="187"/>
    </location>
</feature>
<feature type="transmembrane region" description="Helical" evidence="1">
    <location>
        <begin position="25"/>
        <end position="45"/>
    </location>
</feature>
<feature type="transmembrane region" description="Helical" evidence="1">
    <location>
        <begin position="50"/>
        <end position="70"/>
    </location>
</feature>
<feature type="transmembrane region" description="Helical" evidence="1">
    <location>
        <begin position="76"/>
        <end position="96"/>
    </location>
</feature>
<feature type="transmembrane region" description="Helical" evidence="1">
    <location>
        <begin position="118"/>
        <end position="138"/>
    </location>
</feature>
<feature type="transmembrane region" description="Helical" evidence="1">
    <location>
        <begin position="148"/>
        <end position="168"/>
    </location>
</feature>
<gene>
    <name evidence="1" type="primary">yciB</name>
    <name type="ordered locus">VV1213</name>
</gene>
<comment type="function">
    <text evidence="1">Plays a role in cell envelope biogenesis, maintenance of cell envelope integrity and membrane homeostasis.</text>
</comment>
<comment type="subcellular location">
    <subcellularLocation>
        <location evidence="1">Cell inner membrane</location>
        <topology evidence="1">Multi-pass membrane protein</topology>
    </subcellularLocation>
</comment>
<comment type="similarity">
    <text evidence="1">Belongs to the YciB family.</text>
</comment>
<comment type="sequence caution" evidence="2">
    <conflict type="erroneous initiation">
        <sequence resource="EMBL-CDS" id="BAC93977"/>
    </conflict>
</comment>
<organism>
    <name type="scientific">Vibrio vulnificus (strain YJ016)</name>
    <dbReference type="NCBI Taxonomy" id="196600"/>
    <lineage>
        <taxon>Bacteria</taxon>
        <taxon>Pseudomonadati</taxon>
        <taxon>Pseudomonadota</taxon>
        <taxon>Gammaproteobacteria</taxon>
        <taxon>Vibrionales</taxon>
        <taxon>Vibrionaceae</taxon>
        <taxon>Vibrio</taxon>
    </lineage>
</organism>
<dbReference type="EMBL" id="BA000037">
    <property type="protein sequence ID" value="BAC93977.1"/>
    <property type="status" value="ALT_INIT"/>
    <property type="molecule type" value="Genomic_DNA"/>
</dbReference>
<dbReference type="RefSeq" id="WP_011080875.1">
    <property type="nucleotide sequence ID" value="NC_005139.1"/>
</dbReference>
<dbReference type="STRING" id="672.VV93_v1c11310"/>
<dbReference type="KEGG" id="vvy:VV1213"/>
<dbReference type="eggNOG" id="COG2917">
    <property type="taxonomic scope" value="Bacteria"/>
</dbReference>
<dbReference type="HOGENOM" id="CLU_089554_2_0_6"/>
<dbReference type="Proteomes" id="UP000002675">
    <property type="component" value="Chromosome I"/>
</dbReference>
<dbReference type="GO" id="GO:0005886">
    <property type="term" value="C:plasma membrane"/>
    <property type="evidence" value="ECO:0007669"/>
    <property type="project" value="UniProtKB-SubCell"/>
</dbReference>
<dbReference type="HAMAP" id="MF_00189">
    <property type="entry name" value="YciB"/>
    <property type="match status" value="1"/>
</dbReference>
<dbReference type="InterPro" id="IPR006008">
    <property type="entry name" value="YciB"/>
</dbReference>
<dbReference type="NCBIfam" id="TIGR00997">
    <property type="entry name" value="ispZ"/>
    <property type="match status" value="1"/>
</dbReference>
<dbReference type="NCBIfam" id="NF001324">
    <property type="entry name" value="PRK00259.1-2"/>
    <property type="match status" value="1"/>
</dbReference>
<dbReference type="NCBIfam" id="NF001325">
    <property type="entry name" value="PRK00259.1-3"/>
    <property type="match status" value="1"/>
</dbReference>
<dbReference type="PANTHER" id="PTHR36917:SF1">
    <property type="entry name" value="INNER MEMBRANE-SPANNING PROTEIN YCIB"/>
    <property type="match status" value="1"/>
</dbReference>
<dbReference type="PANTHER" id="PTHR36917">
    <property type="entry name" value="INTRACELLULAR SEPTATION PROTEIN A-RELATED"/>
    <property type="match status" value="1"/>
</dbReference>
<dbReference type="Pfam" id="PF04279">
    <property type="entry name" value="IspA"/>
    <property type="match status" value="1"/>
</dbReference>
<evidence type="ECO:0000255" key="1">
    <source>
        <dbReference type="HAMAP-Rule" id="MF_00189"/>
    </source>
</evidence>
<evidence type="ECO:0000305" key="2"/>
<protein>
    <recommendedName>
        <fullName evidence="1">Inner membrane-spanning protein YciB</fullName>
    </recommendedName>
</protein>
<sequence>MKQILDFIPLIIFFALYKMYDIYVATGALIAATAIQIVVTYALYKKVEKMQLITFLMVAIFGGMTIFLHDDNFIKWKVTIVYAVFAIGLTVSHVMGKSAIKGMLGKEITLPESVWANINWAWVGFFTFCAGLNIYVAYQLPLDVWVNFKVFGLLAATLVFTVLTGGYIYKHLPKEQNGQSSDVPTDE</sequence>
<proteinExistence type="inferred from homology"/>